<organism>
    <name type="scientific">Novosphingobium aromaticivorans (strain ATCC 700278 / DSM 12444 / CCUG 56034 / CIP 105152 / NBRC 16084 / F199)</name>
    <dbReference type="NCBI Taxonomy" id="279238"/>
    <lineage>
        <taxon>Bacteria</taxon>
        <taxon>Pseudomonadati</taxon>
        <taxon>Pseudomonadota</taxon>
        <taxon>Alphaproteobacteria</taxon>
        <taxon>Sphingomonadales</taxon>
        <taxon>Sphingomonadaceae</taxon>
        <taxon>Novosphingobium</taxon>
    </lineage>
</organism>
<gene>
    <name evidence="1" type="primary">tgt</name>
    <name type="ordered locus">Saro_2247</name>
</gene>
<evidence type="ECO:0000255" key="1">
    <source>
        <dbReference type="HAMAP-Rule" id="MF_00168"/>
    </source>
</evidence>
<protein>
    <recommendedName>
        <fullName evidence="1">Queuine tRNA-ribosyltransferase</fullName>
        <ecNumber evidence="1">2.4.2.29</ecNumber>
    </recommendedName>
    <alternativeName>
        <fullName evidence="1">Guanine insertion enzyme</fullName>
    </alternativeName>
    <alternativeName>
        <fullName evidence="1">tRNA-guanine transglycosylase</fullName>
    </alternativeName>
</protein>
<name>TGT_NOVAD</name>
<accession>Q2G639</accession>
<keyword id="KW-0328">Glycosyltransferase</keyword>
<keyword id="KW-0479">Metal-binding</keyword>
<keyword id="KW-0671">Queuosine biosynthesis</keyword>
<keyword id="KW-1185">Reference proteome</keyword>
<keyword id="KW-0808">Transferase</keyword>
<keyword id="KW-0819">tRNA processing</keyword>
<keyword id="KW-0862">Zinc</keyword>
<reference key="1">
    <citation type="submission" date="2006-01" db="EMBL/GenBank/DDBJ databases">
        <title>Complete sequence of Novosphingobium aromaticivorans DSM 12444.</title>
        <authorList>
            <consortium name="US DOE Joint Genome Institute"/>
            <person name="Copeland A."/>
            <person name="Lucas S."/>
            <person name="Lapidus A."/>
            <person name="Barry K."/>
            <person name="Detter J.C."/>
            <person name="Glavina T."/>
            <person name="Hammon N."/>
            <person name="Israni S."/>
            <person name="Pitluck S."/>
            <person name="Chain P."/>
            <person name="Malfatti S."/>
            <person name="Shin M."/>
            <person name="Vergez L."/>
            <person name="Schmutz J."/>
            <person name="Larimer F."/>
            <person name="Land M."/>
            <person name="Kyrpides N."/>
            <person name="Ivanova N."/>
            <person name="Fredrickson J."/>
            <person name="Balkwill D."/>
            <person name="Romine M.F."/>
            <person name="Richardson P."/>
        </authorList>
    </citation>
    <scope>NUCLEOTIDE SEQUENCE [LARGE SCALE GENOMIC DNA]</scope>
    <source>
        <strain>ATCC 700278 / DSM 12444 / CCUG 56034 / CIP 105152 / NBRC 16084 / F199</strain>
    </source>
</reference>
<comment type="function">
    <text evidence="1">Catalyzes the base-exchange of a guanine (G) residue with the queuine precursor 7-aminomethyl-7-deazaguanine (PreQ1) at position 34 (anticodon wobble position) in tRNAs with GU(N) anticodons (tRNA-Asp, -Asn, -His and -Tyr). Catalysis occurs through a double-displacement mechanism. The nucleophile active site attacks the C1' of nucleotide 34 to detach the guanine base from the RNA, forming a covalent enzyme-RNA intermediate. The proton acceptor active site deprotonates the incoming PreQ1, allowing a nucleophilic attack on the C1' of the ribose to form the product. After dissociation, two additional enzymatic reactions on the tRNA convert PreQ1 to queuine (Q), resulting in the hypermodified nucleoside queuosine (7-(((4,5-cis-dihydroxy-2-cyclopenten-1-yl)amino)methyl)-7-deazaguanosine).</text>
</comment>
<comment type="catalytic activity">
    <reaction evidence="1">
        <text>7-aminomethyl-7-carbaguanine + guanosine(34) in tRNA = 7-aminomethyl-7-carbaguanosine(34) in tRNA + guanine</text>
        <dbReference type="Rhea" id="RHEA:24104"/>
        <dbReference type="Rhea" id="RHEA-COMP:10341"/>
        <dbReference type="Rhea" id="RHEA-COMP:10342"/>
        <dbReference type="ChEBI" id="CHEBI:16235"/>
        <dbReference type="ChEBI" id="CHEBI:58703"/>
        <dbReference type="ChEBI" id="CHEBI:74269"/>
        <dbReference type="ChEBI" id="CHEBI:82833"/>
        <dbReference type="EC" id="2.4.2.29"/>
    </reaction>
</comment>
<comment type="cofactor">
    <cofactor evidence="1">
        <name>Zn(2+)</name>
        <dbReference type="ChEBI" id="CHEBI:29105"/>
    </cofactor>
    <text evidence="1">Binds 1 zinc ion per subunit.</text>
</comment>
<comment type="pathway">
    <text evidence="1">tRNA modification; tRNA-queuosine biosynthesis.</text>
</comment>
<comment type="subunit">
    <text evidence="1">Homodimer. Within each dimer, one monomer is responsible for RNA recognition and catalysis, while the other monomer binds to the replacement base PreQ1.</text>
</comment>
<comment type="similarity">
    <text evidence="1">Belongs to the queuine tRNA-ribosyltransferase family.</text>
</comment>
<dbReference type="EC" id="2.4.2.29" evidence="1"/>
<dbReference type="EMBL" id="CP000248">
    <property type="protein sequence ID" value="ABD26684.1"/>
    <property type="molecule type" value="Genomic_DNA"/>
</dbReference>
<dbReference type="RefSeq" id="WP_011445890.1">
    <property type="nucleotide sequence ID" value="NC_007794.1"/>
</dbReference>
<dbReference type="SMR" id="Q2G639"/>
<dbReference type="STRING" id="279238.Saro_2247"/>
<dbReference type="KEGG" id="nar:Saro_2247"/>
<dbReference type="eggNOG" id="COG0343">
    <property type="taxonomic scope" value="Bacteria"/>
</dbReference>
<dbReference type="HOGENOM" id="CLU_022060_0_1_5"/>
<dbReference type="UniPathway" id="UPA00392"/>
<dbReference type="Proteomes" id="UP000009134">
    <property type="component" value="Chromosome"/>
</dbReference>
<dbReference type="GO" id="GO:0005829">
    <property type="term" value="C:cytosol"/>
    <property type="evidence" value="ECO:0007669"/>
    <property type="project" value="TreeGrafter"/>
</dbReference>
<dbReference type="GO" id="GO:0046872">
    <property type="term" value="F:metal ion binding"/>
    <property type="evidence" value="ECO:0007669"/>
    <property type="project" value="UniProtKB-KW"/>
</dbReference>
<dbReference type="GO" id="GO:0008479">
    <property type="term" value="F:tRNA-guanosine(34) queuine transglycosylase activity"/>
    <property type="evidence" value="ECO:0007669"/>
    <property type="project" value="UniProtKB-UniRule"/>
</dbReference>
<dbReference type="GO" id="GO:0008616">
    <property type="term" value="P:queuosine biosynthetic process"/>
    <property type="evidence" value="ECO:0007669"/>
    <property type="project" value="UniProtKB-UniRule"/>
</dbReference>
<dbReference type="GO" id="GO:0002099">
    <property type="term" value="P:tRNA wobble guanine modification"/>
    <property type="evidence" value="ECO:0007669"/>
    <property type="project" value="TreeGrafter"/>
</dbReference>
<dbReference type="GO" id="GO:0101030">
    <property type="term" value="P:tRNA-guanine transglycosylation"/>
    <property type="evidence" value="ECO:0007669"/>
    <property type="project" value="InterPro"/>
</dbReference>
<dbReference type="FunFam" id="3.20.20.105:FF:000001">
    <property type="entry name" value="Queuine tRNA-ribosyltransferase"/>
    <property type="match status" value="1"/>
</dbReference>
<dbReference type="Gene3D" id="3.20.20.105">
    <property type="entry name" value="Queuine tRNA-ribosyltransferase-like"/>
    <property type="match status" value="1"/>
</dbReference>
<dbReference type="HAMAP" id="MF_00168">
    <property type="entry name" value="Q_tRNA_Tgt"/>
    <property type="match status" value="1"/>
</dbReference>
<dbReference type="InterPro" id="IPR050076">
    <property type="entry name" value="ArchSynthase1/Queuine_TRR"/>
</dbReference>
<dbReference type="InterPro" id="IPR004803">
    <property type="entry name" value="TGT"/>
</dbReference>
<dbReference type="InterPro" id="IPR036511">
    <property type="entry name" value="TGT-like_sf"/>
</dbReference>
<dbReference type="InterPro" id="IPR002616">
    <property type="entry name" value="tRNA_ribo_trans-like"/>
</dbReference>
<dbReference type="NCBIfam" id="TIGR00430">
    <property type="entry name" value="Q_tRNA_tgt"/>
    <property type="match status" value="1"/>
</dbReference>
<dbReference type="NCBIfam" id="TIGR00449">
    <property type="entry name" value="tgt_general"/>
    <property type="match status" value="1"/>
</dbReference>
<dbReference type="PANTHER" id="PTHR46499">
    <property type="entry name" value="QUEUINE TRNA-RIBOSYLTRANSFERASE"/>
    <property type="match status" value="1"/>
</dbReference>
<dbReference type="PANTHER" id="PTHR46499:SF1">
    <property type="entry name" value="QUEUINE TRNA-RIBOSYLTRANSFERASE"/>
    <property type="match status" value="1"/>
</dbReference>
<dbReference type="Pfam" id="PF01702">
    <property type="entry name" value="TGT"/>
    <property type="match status" value="1"/>
</dbReference>
<dbReference type="SUPFAM" id="SSF51713">
    <property type="entry name" value="tRNA-guanine transglycosylase"/>
    <property type="match status" value="1"/>
</dbReference>
<sequence>MTRFSFKIHATDGKARTGAIQMMRGEIRTPAFMPVGTAATVKAMKVEDVRASGADIILGNTYHLMLRPGAERVARLGGLHKFMGWDRPILTDSGGYQVMSLSDLRKITEEGVTFASHLDGSRHLLSPERSMEIQRLLGSDIVMCFDECPRADQPREVIARSMEMSMRWARRSRDAFDAGGEHAERSALFGIQQGALDEGLRKTSADALTDIGFDGYAIGGLAVGEGQEAMFATLDFAPQQLPADRPRYLMGVGKPDDLVGAVERGVDMFDCVLPTRSGRNGQAFTWNGPLNMRNARHAEDTGPLDERCPCPTCTKYSRAYLHHLHKSGEMLGAMLLTEHNLWFYQQLMAGMRAAIAEGRFAAFAADFRRDYFAR</sequence>
<proteinExistence type="inferred from homology"/>
<feature type="chain" id="PRO_1000198018" description="Queuine tRNA-ribosyltransferase">
    <location>
        <begin position="1"/>
        <end position="374"/>
    </location>
</feature>
<feature type="region of interest" description="RNA binding" evidence="1">
    <location>
        <begin position="251"/>
        <end position="257"/>
    </location>
</feature>
<feature type="region of interest" description="RNA binding; important for wobble base 34 recognition" evidence="1">
    <location>
        <begin position="275"/>
        <end position="279"/>
    </location>
</feature>
<feature type="active site" description="Proton acceptor" evidence="1">
    <location>
        <position position="92"/>
    </location>
</feature>
<feature type="active site" description="Nucleophile" evidence="1">
    <location>
        <position position="270"/>
    </location>
</feature>
<feature type="binding site" evidence="1">
    <location>
        <begin position="92"/>
        <end position="96"/>
    </location>
    <ligand>
        <name>substrate</name>
    </ligand>
</feature>
<feature type="binding site" evidence="1">
    <location>
        <position position="146"/>
    </location>
    <ligand>
        <name>substrate</name>
    </ligand>
</feature>
<feature type="binding site" evidence="1">
    <location>
        <position position="193"/>
    </location>
    <ligand>
        <name>substrate</name>
    </ligand>
</feature>
<feature type="binding site" evidence="1">
    <location>
        <position position="220"/>
    </location>
    <ligand>
        <name>substrate</name>
    </ligand>
</feature>
<feature type="binding site" evidence="1">
    <location>
        <position position="308"/>
    </location>
    <ligand>
        <name>Zn(2+)</name>
        <dbReference type="ChEBI" id="CHEBI:29105"/>
    </ligand>
</feature>
<feature type="binding site" evidence="1">
    <location>
        <position position="310"/>
    </location>
    <ligand>
        <name>Zn(2+)</name>
        <dbReference type="ChEBI" id="CHEBI:29105"/>
    </ligand>
</feature>
<feature type="binding site" evidence="1">
    <location>
        <position position="313"/>
    </location>
    <ligand>
        <name>Zn(2+)</name>
        <dbReference type="ChEBI" id="CHEBI:29105"/>
    </ligand>
</feature>
<feature type="binding site" evidence="1">
    <location>
        <position position="339"/>
    </location>
    <ligand>
        <name>Zn(2+)</name>
        <dbReference type="ChEBI" id="CHEBI:29105"/>
    </ligand>
</feature>